<comment type="function">
    <text>Central component of the spindle assembly checkpoint.</text>
</comment>
<comment type="subcellular location">
    <subcellularLocation>
        <location evidence="1">Nucleus</location>
    </subcellularLocation>
</comment>
<comment type="similarity">
    <text evidence="3">Belongs to the MAD1 family.</text>
</comment>
<protein>
    <recommendedName>
        <fullName>Spindle assembly checkpoint component MAD1</fullName>
    </recommendedName>
    <alternativeName>
        <fullName>Mitotic arrest deficient protein 1</fullName>
    </alternativeName>
</protein>
<accession>Q6BSY1</accession>
<sequence length="669" mass="78158">MSDTASSPFIDRPRSMLDEDSEFNSRQLISNLQFQISSLKTEKSLLQQNKESMAEKYEALLITKNEEVVSLQNDFDYVFKQRDELQSKYDNSQQINGKTVESLQVQLKDITERYDELKEEHEYLNSDFKKFCRDNNQVKSDLEFHINSKDQMNEKITSLQDENKSLCKTNDELIEKLNSISEQLVSNTQDKFSRNLQEQNSKLQRTNNQLQLKVDSLLQHRTSVELLRQKNITLTNKLSSLANLEEKCCKLEIENLELSNKFDTFFKTIEDSVNDDTSRTNESVVIEFMNKYKRLQNLNLVLQDKYNQSVTGVKNMQTELSNMQQKYSEAISKVESLNETVSTKTEFIDKLERQKLLNVKEIEYLRDSLKKLEELNLKRSKEETNDKSTEQYMTNLEKLVDEYRTEINTLQKQMSSQEIQSNVQSGSKRPRIIDNGIQNDFKSQVSVLEKENLKLLSTIKNLEYNNKTLGEKLQNLESLDNKKKELHILQLKSNPASQDQLIKQQTLDLLSKENQEMIETFVKNKSAHDMIPKSLFERQENDKLQLQTKIDQLNKRISRLRDIYSQKSRDILSVISKFFGYTIEFLPSPINSNDLSSRIKLVSKYMNNKDESNSAYLILDVNSKSLKANGSLEFKTLCEDLVTNWIREKDQIPCFLSALNLSIYDKYVS</sequence>
<gene>
    <name type="primary">MAD1</name>
    <name type="ordered locus">DEHA2D05126g</name>
</gene>
<evidence type="ECO:0000250" key="1"/>
<evidence type="ECO:0000255" key="2"/>
<evidence type="ECO:0000305" key="3"/>
<feature type="chain" id="PRO_0000213793" description="Spindle assembly checkpoint component MAD1">
    <location>
        <begin position="1"/>
        <end position="669"/>
    </location>
</feature>
<feature type="coiled-coil region" evidence="2">
    <location>
        <begin position="24"/>
        <end position="225"/>
    </location>
</feature>
<feature type="coiled-coil region" evidence="2">
    <location>
        <begin position="302"/>
        <end position="487"/>
    </location>
</feature>
<feature type="coiled-coil region" evidence="2">
    <location>
        <begin position="533"/>
        <end position="573"/>
    </location>
</feature>
<proteinExistence type="inferred from homology"/>
<organism>
    <name type="scientific">Debaryomyces hansenii (strain ATCC 36239 / CBS 767 / BCRC 21394 / JCM 1990 / NBRC 0083 / IGC 2968)</name>
    <name type="common">Yeast</name>
    <name type="synonym">Torulaspora hansenii</name>
    <dbReference type="NCBI Taxonomy" id="284592"/>
    <lineage>
        <taxon>Eukaryota</taxon>
        <taxon>Fungi</taxon>
        <taxon>Dikarya</taxon>
        <taxon>Ascomycota</taxon>
        <taxon>Saccharomycotina</taxon>
        <taxon>Pichiomycetes</taxon>
        <taxon>Debaryomycetaceae</taxon>
        <taxon>Debaryomyces</taxon>
    </lineage>
</organism>
<name>MAD1_DEBHA</name>
<reference key="1">
    <citation type="journal article" date="2004" name="Nature">
        <title>Genome evolution in yeasts.</title>
        <authorList>
            <person name="Dujon B."/>
            <person name="Sherman D."/>
            <person name="Fischer G."/>
            <person name="Durrens P."/>
            <person name="Casaregola S."/>
            <person name="Lafontaine I."/>
            <person name="de Montigny J."/>
            <person name="Marck C."/>
            <person name="Neuveglise C."/>
            <person name="Talla E."/>
            <person name="Goffard N."/>
            <person name="Frangeul L."/>
            <person name="Aigle M."/>
            <person name="Anthouard V."/>
            <person name="Babour A."/>
            <person name="Barbe V."/>
            <person name="Barnay S."/>
            <person name="Blanchin S."/>
            <person name="Beckerich J.-M."/>
            <person name="Beyne E."/>
            <person name="Bleykasten C."/>
            <person name="Boisrame A."/>
            <person name="Boyer J."/>
            <person name="Cattolico L."/>
            <person name="Confanioleri F."/>
            <person name="de Daruvar A."/>
            <person name="Despons L."/>
            <person name="Fabre E."/>
            <person name="Fairhead C."/>
            <person name="Ferry-Dumazet H."/>
            <person name="Groppi A."/>
            <person name="Hantraye F."/>
            <person name="Hennequin C."/>
            <person name="Jauniaux N."/>
            <person name="Joyet P."/>
            <person name="Kachouri R."/>
            <person name="Kerrest A."/>
            <person name="Koszul R."/>
            <person name="Lemaire M."/>
            <person name="Lesur I."/>
            <person name="Ma L."/>
            <person name="Muller H."/>
            <person name="Nicaud J.-M."/>
            <person name="Nikolski M."/>
            <person name="Oztas S."/>
            <person name="Ozier-Kalogeropoulos O."/>
            <person name="Pellenz S."/>
            <person name="Potier S."/>
            <person name="Richard G.-F."/>
            <person name="Straub M.-L."/>
            <person name="Suleau A."/>
            <person name="Swennen D."/>
            <person name="Tekaia F."/>
            <person name="Wesolowski-Louvel M."/>
            <person name="Westhof E."/>
            <person name="Wirth B."/>
            <person name="Zeniou-Meyer M."/>
            <person name="Zivanovic Y."/>
            <person name="Bolotin-Fukuhara M."/>
            <person name="Thierry A."/>
            <person name="Bouchier C."/>
            <person name="Caudron B."/>
            <person name="Scarpelli C."/>
            <person name="Gaillardin C."/>
            <person name="Weissenbach J."/>
            <person name="Wincker P."/>
            <person name="Souciet J.-L."/>
        </authorList>
    </citation>
    <scope>NUCLEOTIDE SEQUENCE [LARGE SCALE GENOMIC DNA]</scope>
    <source>
        <strain>ATCC 36239 / CBS 767 / BCRC 21394 / JCM 1990 / NBRC 0083 / IGC 2968</strain>
    </source>
</reference>
<keyword id="KW-0131">Cell cycle</keyword>
<keyword id="KW-0132">Cell division</keyword>
<keyword id="KW-0175">Coiled coil</keyword>
<keyword id="KW-0498">Mitosis</keyword>
<keyword id="KW-0539">Nucleus</keyword>
<keyword id="KW-1185">Reference proteome</keyword>
<dbReference type="EMBL" id="CR382136">
    <property type="protein sequence ID" value="CAG86828.2"/>
    <property type="molecule type" value="Genomic_DNA"/>
</dbReference>
<dbReference type="RefSeq" id="XP_458689.2">
    <property type="nucleotide sequence ID" value="XM_458689.1"/>
</dbReference>
<dbReference type="SMR" id="Q6BSY1"/>
<dbReference type="FunCoup" id="Q6BSY1">
    <property type="interactions" value="332"/>
</dbReference>
<dbReference type="STRING" id="284592.Q6BSY1"/>
<dbReference type="GeneID" id="2901092"/>
<dbReference type="KEGG" id="dha:DEHA2D05126g"/>
<dbReference type="VEuPathDB" id="FungiDB:DEHA2D05126g"/>
<dbReference type="eggNOG" id="KOG4593">
    <property type="taxonomic scope" value="Eukaryota"/>
</dbReference>
<dbReference type="HOGENOM" id="CLU_418026_0_0_1"/>
<dbReference type="InParanoid" id="Q6BSY1"/>
<dbReference type="OMA" id="YKLDFMP"/>
<dbReference type="OrthoDB" id="331602at2759"/>
<dbReference type="Proteomes" id="UP000000599">
    <property type="component" value="Chromosome D"/>
</dbReference>
<dbReference type="GO" id="GO:0000776">
    <property type="term" value="C:kinetochore"/>
    <property type="evidence" value="ECO:0007669"/>
    <property type="project" value="TreeGrafter"/>
</dbReference>
<dbReference type="GO" id="GO:0072686">
    <property type="term" value="C:mitotic spindle"/>
    <property type="evidence" value="ECO:0007669"/>
    <property type="project" value="TreeGrafter"/>
</dbReference>
<dbReference type="GO" id="GO:0005635">
    <property type="term" value="C:nuclear envelope"/>
    <property type="evidence" value="ECO:0007669"/>
    <property type="project" value="TreeGrafter"/>
</dbReference>
<dbReference type="GO" id="GO:0051315">
    <property type="term" value="P:attachment of mitotic spindle microtubules to kinetochore"/>
    <property type="evidence" value="ECO:0007669"/>
    <property type="project" value="TreeGrafter"/>
</dbReference>
<dbReference type="GO" id="GO:0051301">
    <property type="term" value="P:cell division"/>
    <property type="evidence" value="ECO:0007669"/>
    <property type="project" value="UniProtKB-KW"/>
</dbReference>
<dbReference type="GO" id="GO:0007094">
    <property type="term" value="P:mitotic spindle assembly checkpoint signaling"/>
    <property type="evidence" value="ECO:0007669"/>
    <property type="project" value="InterPro"/>
</dbReference>
<dbReference type="Gene3D" id="3.30.457.60">
    <property type="match status" value="1"/>
</dbReference>
<dbReference type="InterPro" id="IPR008672">
    <property type="entry name" value="Mad1"/>
</dbReference>
<dbReference type="PANTHER" id="PTHR23168:SF0">
    <property type="entry name" value="MITOTIC SPINDLE ASSEMBLY CHECKPOINT PROTEIN MAD1"/>
    <property type="match status" value="1"/>
</dbReference>
<dbReference type="PANTHER" id="PTHR23168">
    <property type="entry name" value="MITOTIC SPINDLE ASSEMBLY CHECKPOINT PROTEIN MAD1 MITOTIC ARREST DEFICIENT-LIKE PROTEIN 1"/>
    <property type="match status" value="1"/>
</dbReference>
<dbReference type="Pfam" id="PF05557">
    <property type="entry name" value="MAD"/>
    <property type="match status" value="1"/>
</dbReference>